<gene>
    <name evidence="6" type="primary">darT</name>
    <name evidence="7" type="ordered locus">BCG_0090</name>
</gene>
<sequence length="230" mass="25580">MITRYKPESGFVARSGGPDRKRPHDWIVWHFTHADNLPGIITAGRLLADSAVTPTTEVAYNPVKELRRHKVVAPDSRYPASMASDHVPFYIAARSPMLYVVCKGHSGYSGGAGPLVHLGVALGDIIDADLTWCASDGNAAASYTKFSRQVDTLGTFVDFDLLCQRQWHNTDDDPNRQSRRAAEILVYGHVPFELVSYVCCYNTETMTRVRTLLDPVGGVRKYVIKPGMYY</sequence>
<reference evidence="7" key="1">
    <citation type="journal article" date="2007" name="Proc. Natl. Acad. Sci. U.S.A.">
        <title>Genome plasticity of BCG and impact on vaccine efficacy.</title>
        <authorList>
            <person name="Brosch R."/>
            <person name="Gordon S.V."/>
            <person name="Garnier T."/>
            <person name="Eiglmeier K."/>
            <person name="Frigui W."/>
            <person name="Valenti P."/>
            <person name="Dos Santos S."/>
            <person name="Duthoy S."/>
            <person name="Lacroix C."/>
            <person name="Garcia-Pelayo C."/>
            <person name="Inwald J.K."/>
            <person name="Golby P."/>
            <person name="Garcia J.N."/>
            <person name="Hewinson R.G."/>
            <person name="Behr M.A."/>
            <person name="Quail M.A."/>
            <person name="Churcher C."/>
            <person name="Barrell B.G."/>
            <person name="Parkhill J."/>
            <person name="Cole S.T."/>
        </authorList>
    </citation>
    <scope>NUCLEOTIDE SEQUENCE [LARGE SCALE GENOMIC DNA]</scope>
    <source>
        <strain>BCG / Pasteur 1173P2</strain>
    </source>
</reference>
<reference key="2">
    <citation type="journal article" date="2021" name="Nature">
        <title>Molecular basis for DarT ADP-ribosylation of a DNA base.</title>
        <authorList>
            <person name="Schuller M."/>
            <person name="Butler R.E."/>
            <person name="Ariza A."/>
            <person name="Tromans-Coia C."/>
            <person name="Jankevicius G."/>
            <person name="Claridge T.D.W."/>
            <person name="Kendall S.L."/>
            <person name="Goh S."/>
            <person name="Stewart G.R."/>
            <person name="Ahel I."/>
        </authorList>
    </citation>
    <scope>INDUCTION BY DNA DAMAGE</scope>
    <source>
        <strain>BCG</strain>
    </source>
</reference>
<proteinExistence type="evidence at transcript level"/>
<organism>
    <name type="scientific">Mycobacterium bovis (strain BCG / Pasteur 1173P2)</name>
    <dbReference type="NCBI Taxonomy" id="410289"/>
    <lineage>
        <taxon>Bacteria</taxon>
        <taxon>Bacillati</taxon>
        <taxon>Actinomycetota</taxon>
        <taxon>Actinomycetes</taxon>
        <taxon>Mycobacteriales</taxon>
        <taxon>Mycobacteriaceae</taxon>
        <taxon>Mycobacterium</taxon>
        <taxon>Mycobacterium tuberculosis complex</taxon>
    </lineage>
</organism>
<evidence type="ECO:0000250" key="1">
    <source>
        <dbReference type="UniProtKB" id="A0A0B0SG80"/>
    </source>
</evidence>
<evidence type="ECO:0000250" key="2">
    <source>
        <dbReference type="UniProtKB" id="B7UP20"/>
    </source>
</evidence>
<evidence type="ECO:0000250" key="3">
    <source>
        <dbReference type="UniProtKB" id="O53604"/>
    </source>
</evidence>
<evidence type="ECO:0000255" key="4">
    <source>
        <dbReference type="PROSITE-ProRule" id="PRU01362"/>
    </source>
</evidence>
<evidence type="ECO:0000269" key="5">
    <source>
    </source>
</evidence>
<evidence type="ECO:0000303" key="6">
    <source>
    </source>
</evidence>
<evidence type="ECO:0000312" key="7">
    <source>
        <dbReference type="EMBL" id="CAL70074.1"/>
    </source>
</evidence>
<keyword id="KW-0238">DNA-binding</keyword>
<keyword id="KW-0328">Glycosyltransferase</keyword>
<keyword id="KW-0548">Nucleotidyltransferase</keyword>
<keyword id="KW-1277">Toxin-antitoxin system</keyword>
<keyword id="KW-0808">Transferase</keyword>
<accession>A0A0H3M0L1</accession>
<feature type="chain" id="PRO_0000456049" description="DNA ADP-ribosyl transferase">
    <location>
        <begin position="1"/>
        <end position="230"/>
    </location>
</feature>
<feature type="domain" description="DarT" evidence="4">
    <location>
        <begin position="26"/>
        <end position="230"/>
    </location>
</feature>
<feature type="active site" description="Proton acceptor" evidence="4">
    <location>
        <position position="67"/>
    </location>
</feature>
<feature type="active site" evidence="4">
    <location>
        <position position="183"/>
    </location>
</feature>
<feature type="binding site" evidence="4">
    <location>
        <begin position="30"/>
        <end position="32"/>
    </location>
    <ligand>
        <name>NAD(+)</name>
        <dbReference type="ChEBI" id="CHEBI:57540"/>
    </ligand>
</feature>
<feature type="binding site" evidence="4">
    <location>
        <position position="39"/>
    </location>
    <ligand>
        <name>NAD(+)</name>
        <dbReference type="ChEBI" id="CHEBI:57540"/>
    </ligand>
</feature>
<feature type="binding site" evidence="4">
    <location>
        <position position="47"/>
    </location>
    <ligand>
        <name>NAD(+)</name>
        <dbReference type="ChEBI" id="CHEBI:57540"/>
    </ligand>
</feature>
<feature type="binding site" evidence="4">
    <location>
        <position position="67"/>
    </location>
    <ligand>
        <name>NAD(+)</name>
        <dbReference type="ChEBI" id="CHEBI:57540"/>
    </ligand>
</feature>
<dbReference type="EC" id="2.4.2.-" evidence="3"/>
<dbReference type="EMBL" id="AM408590">
    <property type="protein sequence ID" value="CAL70074.1"/>
    <property type="molecule type" value="Genomic_DNA"/>
</dbReference>
<dbReference type="RefSeq" id="WP_003400548.1">
    <property type="nucleotide sequence ID" value="NC_008769.1"/>
</dbReference>
<dbReference type="SMR" id="A0A0H3M0L1"/>
<dbReference type="GeneID" id="45424018"/>
<dbReference type="KEGG" id="mbb:BCG_0090"/>
<dbReference type="HOGENOM" id="CLU_113641_1_0_11"/>
<dbReference type="Proteomes" id="UP000001472">
    <property type="component" value="Chromosome"/>
</dbReference>
<dbReference type="GO" id="GO:0003677">
    <property type="term" value="F:DNA binding"/>
    <property type="evidence" value="ECO:0007669"/>
    <property type="project" value="UniProtKB-KW"/>
</dbReference>
<dbReference type="GO" id="GO:0016757">
    <property type="term" value="F:glycosyltransferase activity"/>
    <property type="evidence" value="ECO:0007669"/>
    <property type="project" value="UniProtKB-KW"/>
</dbReference>
<dbReference type="GO" id="GO:0016779">
    <property type="term" value="F:nucleotidyltransferase activity"/>
    <property type="evidence" value="ECO:0007669"/>
    <property type="project" value="UniProtKB-KW"/>
</dbReference>
<dbReference type="InterPro" id="IPR029494">
    <property type="entry name" value="DarT"/>
</dbReference>
<dbReference type="Pfam" id="PF14487">
    <property type="entry name" value="DarT"/>
    <property type="match status" value="1"/>
</dbReference>
<dbReference type="PROSITE" id="PS52018">
    <property type="entry name" value="DART"/>
    <property type="match status" value="1"/>
</dbReference>
<name>DART_MYCBP</name>
<comment type="function">
    <text evidence="2 3">Toxic component of the hybrid type II/IV toxin-antitoxin (TA) system DarTG, which plays a crucial role in controlling bacterial growth and bacteriophage infection (By similarity). ADP-ribosylates ssDNA, preferentially in the motif TTTW. In case of phage infection, DarT toxin ADP-ribosylates DNA, which inhibits both viral DNA and RNA synthesis and leads to abortive infection (By similarity). Its toxic effect is neutralized by cognate antitoxin DarG.</text>
</comment>
<comment type="catalytic activity">
    <reaction evidence="4">
        <text>a thymidine in DNA + NAD(+) = an N-(ADP-alpha-D-ribosyl)-thymidine in DNA + nicotinamide + H(+)</text>
        <dbReference type="Rhea" id="RHEA:71651"/>
        <dbReference type="Rhea" id="RHEA-COMP:13556"/>
        <dbReference type="Rhea" id="RHEA-COMP:18051"/>
        <dbReference type="ChEBI" id="CHEBI:15378"/>
        <dbReference type="ChEBI" id="CHEBI:17154"/>
        <dbReference type="ChEBI" id="CHEBI:57540"/>
        <dbReference type="ChEBI" id="CHEBI:137386"/>
        <dbReference type="ChEBI" id="CHEBI:191199"/>
    </reaction>
    <physiologicalReaction direction="left-to-right" evidence="4">
        <dbReference type="Rhea" id="RHEA:71652"/>
    </physiologicalReaction>
</comment>
<comment type="subunit">
    <text evidence="3">Interacts with cognate antitoxin DarG (via C-terminus); this heterodimeric complex neutralizes the toxic effect of DarT by preventing ssDNA binding to DarT and consequently inactivating the toxin by direct protein-protein interactions.</text>
</comment>
<comment type="induction">
    <text evidence="5">By DNA damage (mitomycin C) as well as by darT overexpression.</text>
</comment>
<comment type="domain">
    <text evidence="1">The NAD(+)-binding element stabilizes the ADP-ribosylating turn-turn (ARTT) loop which confers substrate specificity; both domains contribute to ssDNA-binding.</text>
</comment>
<comment type="similarity">
    <text evidence="4">Belongs to the DarT ADP-ribosyltransferase family.</text>
</comment>
<protein>
    <recommendedName>
        <fullName evidence="6">DNA ADP-ribosyl transferase</fullName>
        <shortName evidence="6">DarT</shortName>
        <ecNumber evidence="3">2.4.2.-</ecNumber>
    </recommendedName>
    <alternativeName>
        <fullName evidence="6">Toxin DarT</fullName>
    </alternativeName>
</protein>